<proteinExistence type="inferred from homology"/>
<gene>
    <name type="ordered locus">SaurJH1_1194</name>
</gene>
<feature type="chain" id="PRO_1000087803" description="UPF0358 protein SaurJH1_1194">
    <location>
        <begin position="1"/>
        <end position="91"/>
    </location>
</feature>
<accession>A6U0T0</accession>
<name>Y1194_STAA2</name>
<evidence type="ECO:0000255" key="1">
    <source>
        <dbReference type="HAMAP-Rule" id="MF_01560"/>
    </source>
</evidence>
<sequence>MAKQATMKNAALKQLTKDADEILHLIKVQLDNLTLPSCPLYEEVLDTQMFGLQKEVDFAVKLGLVDREDGKQIMLRLEKELSKLHEAFTLV</sequence>
<dbReference type="EMBL" id="CP000736">
    <property type="protein sequence ID" value="ABR52048.1"/>
    <property type="molecule type" value="Genomic_DNA"/>
</dbReference>
<dbReference type="SMR" id="A6U0T0"/>
<dbReference type="KEGG" id="sah:SaurJH1_1194"/>
<dbReference type="HOGENOM" id="CLU_160493_1_0_9"/>
<dbReference type="Gene3D" id="1.10.287.750">
    <property type="entry name" value="SO2669-like"/>
    <property type="match status" value="1"/>
</dbReference>
<dbReference type="HAMAP" id="MF_01560">
    <property type="entry name" value="UPF0358"/>
    <property type="match status" value="1"/>
</dbReference>
<dbReference type="InterPro" id="IPR009983">
    <property type="entry name" value="UPF0358"/>
</dbReference>
<dbReference type="InterPro" id="IPR036270">
    <property type="entry name" value="UPF0358_sf"/>
</dbReference>
<dbReference type="NCBIfam" id="NF010187">
    <property type="entry name" value="PRK13666.1"/>
    <property type="match status" value="1"/>
</dbReference>
<dbReference type="Pfam" id="PF07408">
    <property type="entry name" value="DUF1507"/>
    <property type="match status" value="1"/>
</dbReference>
<dbReference type="SUPFAM" id="SSF140404">
    <property type="entry name" value="EF2458-like"/>
    <property type="match status" value="1"/>
</dbReference>
<organism>
    <name type="scientific">Staphylococcus aureus (strain JH1)</name>
    <dbReference type="NCBI Taxonomy" id="359787"/>
    <lineage>
        <taxon>Bacteria</taxon>
        <taxon>Bacillati</taxon>
        <taxon>Bacillota</taxon>
        <taxon>Bacilli</taxon>
        <taxon>Bacillales</taxon>
        <taxon>Staphylococcaceae</taxon>
        <taxon>Staphylococcus</taxon>
    </lineage>
</organism>
<reference key="1">
    <citation type="submission" date="2007-06" db="EMBL/GenBank/DDBJ databases">
        <title>Complete sequence of chromosome of Staphylococcus aureus subsp. aureus JH1.</title>
        <authorList>
            <consortium name="US DOE Joint Genome Institute"/>
            <person name="Copeland A."/>
            <person name="Lucas S."/>
            <person name="Lapidus A."/>
            <person name="Barry K."/>
            <person name="Detter J.C."/>
            <person name="Glavina del Rio T."/>
            <person name="Hammon N."/>
            <person name="Israni S."/>
            <person name="Dalin E."/>
            <person name="Tice H."/>
            <person name="Pitluck S."/>
            <person name="Chain P."/>
            <person name="Malfatti S."/>
            <person name="Shin M."/>
            <person name="Vergez L."/>
            <person name="Schmutz J."/>
            <person name="Larimer F."/>
            <person name="Land M."/>
            <person name="Hauser L."/>
            <person name="Kyrpides N."/>
            <person name="Ivanova N."/>
            <person name="Tomasz A."/>
            <person name="Richardson P."/>
        </authorList>
    </citation>
    <scope>NUCLEOTIDE SEQUENCE [LARGE SCALE GENOMIC DNA]</scope>
    <source>
        <strain>JH1</strain>
    </source>
</reference>
<comment type="similarity">
    <text evidence="1">Belongs to the UPF0358 family.</text>
</comment>
<protein>
    <recommendedName>
        <fullName evidence="1">UPF0358 protein SaurJH1_1194</fullName>
    </recommendedName>
</protein>